<proteinExistence type="inferred from homology"/>
<reference key="1">
    <citation type="journal article" date="2006" name="Proc. Natl. Acad. Sci. U.S.A.">
        <title>Comparative genomics of the lactic acid bacteria.</title>
        <authorList>
            <person name="Makarova K.S."/>
            <person name="Slesarev A."/>
            <person name="Wolf Y.I."/>
            <person name="Sorokin A."/>
            <person name="Mirkin B."/>
            <person name="Koonin E.V."/>
            <person name="Pavlov A."/>
            <person name="Pavlova N."/>
            <person name="Karamychev V."/>
            <person name="Polouchine N."/>
            <person name="Shakhova V."/>
            <person name="Grigoriev I."/>
            <person name="Lou Y."/>
            <person name="Rohksar D."/>
            <person name="Lucas S."/>
            <person name="Huang K."/>
            <person name="Goodstein D.M."/>
            <person name="Hawkins T."/>
            <person name="Plengvidhya V."/>
            <person name="Welker D."/>
            <person name="Hughes J."/>
            <person name="Goh Y."/>
            <person name="Benson A."/>
            <person name="Baldwin K."/>
            <person name="Lee J.-H."/>
            <person name="Diaz-Muniz I."/>
            <person name="Dosti B."/>
            <person name="Smeianov V."/>
            <person name="Wechter W."/>
            <person name="Barabote R."/>
            <person name="Lorca G."/>
            <person name="Altermann E."/>
            <person name="Barrangou R."/>
            <person name="Ganesan B."/>
            <person name="Xie Y."/>
            <person name="Rawsthorne H."/>
            <person name="Tamir D."/>
            <person name="Parker C."/>
            <person name="Breidt F."/>
            <person name="Broadbent J.R."/>
            <person name="Hutkins R."/>
            <person name="O'Sullivan D."/>
            <person name="Steele J."/>
            <person name="Unlu G."/>
            <person name="Saier M.H. Jr."/>
            <person name="Klaenhammer T."/>
            <person name="Richardson P."/>
            <person name="Kozyavkin S."/>
            <person name="Weimer B.C."/>
            <person name="Mills D.A."/>
        </authorList>
    </citation>
    <scope>NUCLEOTIDE SEQUENCE [LARGE SCALE GENOMIC DNA]</scope>
    <source>
        <strain>ATCC 367 / BCRC 12310 / CIP 105137 / JCM 1170 / LMG 11437 / NCIMB 947 / NCTC 947</strain>
    </source>
</reference>
<protein>
    <recommendedName>
        <fullName evidence="1">Large-conductance mechanosensitive channel</fullName>
    </recommendedName>
</protein>
<accession>Q03SF6</accession>
<name>MSCL_LEVBA</name>
<evidence type="ECO:0000255" key="1">
    <source>
        <dbReference type="HAMAP-Rule" id="MF_00115"/>
    </source>
</evidence>
<sequence>MLKEFKEFIARGNVMDLAVGVIVGAAFTAIVNSLVTNIINPLLGIFVGSIDFSNLVFTVGSAHFRYGAFINSVINFLIIAFVVFLLIKLINKLIAKPAEEPEEAVPSQEEKYLQEIVELLKQDKIEH</sequence>
<keyword id="KW-1003">Cell membrane</keyword>
<keyword id="KW-0407">Ion channel</keyword>
<keyword id="KW-0406">Ion transport</keyword>
<keyword id="KW-0472">Membrane</keyword>
<keyword id="KW-1185">Reference proteome</keyword>
<keyword id="KW-0812">Transmembrane</keyword>
<keyword id="KW-1133">Transmembrane helix</keyword>
<keyword id="KW-0813">Transport</keyword>
<gene>
    <name evidence="1" type="primary">mscL</name>
    <name type="ordered locus">LVIS_0723</name>
</gene>
<feature type="chain" id="PRO_1000015388" description="Large-conductance mechanosensitive channel">
    <location>
        <begin position="1"/>
        <end position="127"/>
    </location>
</feature>
<feature type="transmembrane region" description="Helical" evidence="1">
    <location>
        <begin position="19"/>
        <end position="39"/>
    </location>
</feature>
<feature type="transmembrane region" description="Helical" evidence="1">
    <location>
        <begin position="42"/>
        <end position="62"/>
    </location>
</feature>
<feature type="transmembrane region" description="Helical" evidence="1">
    <location>
        <begin position="67"/>
        <end position="87"/>
    </location>
</feature>
<comment type="function">
    <text evidence="1">Channel that opens in response to stretch forces in the membrane lipid bilayer. May participate in the regulation of osmotic pressure changes within the cell.</text>
</comment>
<comment type="subunit">
    <text evidence="1">Homopentamer.</text>
</comment>
<comment type="subcellular location">
    <subcellularLocation>
        <location evidence="1">Cell membrane</location>
        <topology evidence="1">Multi-pass membrane protein</topology>
    </subcellularLocation>
</comment>
<comment type="similarity">
    <text evidence="1">Belongs to the MscL family.</text>
</comment>
<organism>
    <name type="scientific">Levilactobacillus brevis (strain ATCC 367 / BCRC 12310 / CIP 105137 / JCM 1170 / LMG 11437 / NCIMB 947 / NCTC 947)</name>
    <name type="common">Lactobacillus brevis</name>
    <dbReference type="NCBI Taxonomy" id="387344"/>
    <lineage>
        <taxon>Bacteria</taxon>
        <taxon>Bacillati</taxon>
        <taxon>Bacillota</taxon>
        <taxon>Bacilli</taxon>
        <taxon>Lactobacillales</taxon>
        <taxon>Lactobacillaceae</taxon>
        <taxon>Levilactobacillus</taxon>
    </lineage>
</organism>
<dbReference type="EMBL" id="CP000416">
    <property type="protein sequence ID" value="ABJ63866.1"/>
    <property type="molecule type" value="Genomic_DNA"/>
</dbReference>
<dbReference type="RefSeq" id="WP_011667497.1">
    <property type="nucleotide sequence ID" value="NC_008497.1"/>
</dbReference>
<dbReference type="SMR" id="Q03SF6"/>
<dbReference type="STRING" id="387344.LVIS_0723"/>
<dbReference type="KEGG" id="lbr:LVIS_0723"/>
<dbReference type="eggNOG" id="COG1970">
    <property type="taxonomic scope" value="Bacteria"/>
</dbReference>
<dbReference type="HOGENOM" id="CLU_095787_0_0_9"/>
<dbReference type="Proteomes" id="UP000001652">
    <property type="component" value="Chromosome"/>
</dbReference>
<dbReference type="GO" id="GO:0005886">
    <property type="term" value="C:plasma membrane"/>
    <property type="evidence" value="ECO:0007669"/>
    <property type="project" value="UniProtKB-SubCell"/>
</dbReference>
<dbReference type="GO" id="GO:0008381">
    <property type="term" value="F:mechanosensitive monoatomic ion channel activity"/>
    <property type="evidence" value="ECO:0007669"/>
    <property type="project" value="UniProtKB-UniRule"/>
</dbReference>
<dbReference type="Gene3D" id="1.10.1200.120">
    <property type="entry name" value="Large-conductance mechanosensitive channel, MscL, domain 1"/>
    <property type="match status" value="1"/>
</dbReference>
<dbReference type="HAMAP" id="MF_00115">
    <property type="entry name" value="MscL"/>
    <property type="match status" value="1"/>
</dbReference>
<dbReference type="InterPro" id="IPR019823">
    <property type="entry name" value="Mechanosensitive_channel_CS"/>
</dbReference>
<dbReference type="InterPro" id="IPR001185">
    <property type="entry name" value="MS_channel"/>
</dbReference>
<dbReference type="InterPro" id="IPR037673">
    <property type="entry name" value="MSC/AndL"/>
</dbReference>
<dbReference type="InterPro" id="IPR036019">
    <property type="entry name" value="MscL_channel"/>
</dbReference>
<dbReference type="NCBIfam" id="TIGR00220">
    <property type="entry name" value="mscL"/>
    <property type="match status" value="1"/>
</dbReference>
<dbReference type="NCBIfam" id="NF001842">
    <property type="entry name" value="PRK00567.1-3"/>
    <property type="match status" value="1"/>
</dbReference>
<dbReference type="PANTHER" id="PTHR30266:SF2">
    <property type="entry name" value="LARGE-CONDUCTANCE MECHANOSENSITIVE CHANNEL"/>
    <property type="match status" value="1"/>
</dbReference>
<dbReference type="PANTHER" id="PTHR30266">
    <property type="entry name" value="MECHANOSENSITIVE CHANNEL MSCL"/>
    <property type="match status" value="1"/>
</dbReference>
<dbReference type="Pfam" id="PF01741">
    <property type="entry name" value="MscL"/>
    <property type="match status" value="1"/>
</dbReference>
<dbReference type="PRINTS" id="PR01264">
    <property type="entry name" value="MECHCHANNEL"/>
</dbReference>
<dbReference type="SUPFAM" id="SSF81330">
    <property type="entry name" value="Gated mechanosensitive channel"/>
    <property type="match status" value="1"/>
</dbReference>
<dbReference type="PROSITE" id="PS01327">
    <property type="entry name" value="MSCL"/>
    <property type="match status" value="1"/>
</dbReference>